<sequence length="180" mass="21070">MTSFFNYHEYISSNDRAQTHHPNIYVEYGQSDTKLRRCVRVPRDYSVVGDEYPYFSTHFVGEEPGAYPSEEGPTYDSRSPLKDIISYQEYNDIVGTINGYMKRAFSPWQKCQFIETVLSFLTLWIFERLFASNNERVLAQLDEYIDQLNSKNADRFILINPRKNGFLSLDFLVMVGEPNI</sequence>
<gene>
    <name type="primary">ERF4</name>
    <name type="ordered locus">YALI0E02827g</name>
</gene>
<protein>
    <recommendedName>
        <fullName>Ras modification protein ERF4</fullName>
    </recommendedName>
</protein>
<keyword id="KW-0256">Endoplasmic reticulum</keyword>
<keyword id="KW-0472">Membrane</keyword>
<keyword id="KW-1185">Reference proteome</keyword>
<evidence type="ECO:0000250" key="1">
    <source>
        <dbReference type="UniProtKB" id="P41912"/>
    </source>
</evidence>
<evidence type="ECO:0000305" key="2"/>
<accession>P0C0R1</accession>
<accession>B5FVH0</accession>
<proteinExistence type="inferred from homology"/>
<reference key="1">
    <citation type="journal article" date="2004" name="Nature">
        <title>Genome evolution in yeasts.</title>
        <authorList>
            <person name="Dujon B."/>
            <person name="Sherman D."/>
            <person name="Fischer G."/>
            <person name="Durrens P."/>
            <person name="Casaregola S."/>
            <person name="Lafontaine I."/>
            <person name="de Montigny J."/>
            <person name="Marck C."/>
            <person name="Neuveglise C."/>
            <person name="Talla E."/>
            <person name="Goffard N."/>
            <person name="Frangeul L."/>
            <person name="Aigle M."/>
            <person name="Anthouard V."/>
            <person name="Babour A."/>
            <person name="Barbe V."/>
            <person name="Barnay S."/>
            <person name="Blanchin S."/>
            <person name="Beckerich J.-M."/>
            <person name="Beyne E."/>
            <person name="Bleykasten C."/>
            <person name="Boisrame A."/>
            <person name="Boyer J."/>
            <person name="Cattolico L."/>
            <person name="Confanioleri F."/>
            <person name="de Daruvar A."/>
            <person name="Despons L."/>
            <person name="Fabre E."/>
            <person name="Fairhead C."/>
            <person name="Ferry-Dumazet H."/>
            <person name="Groppi A."/>
            <person name="Hantraye F."/>
            <person name="Hennequin C."/>
            <person name="Jauniaux N."/>
            <person name="Joyet P."/>
            <person name="Kachouri R."/>
            <person name="Kerrest A."/>
            <person name="Koszul R."/>
            <person name="Lemaire M."/>
            <person name="Lesur I."/>
            <person name="Ma L."/>
            <person name="Muller H."/>
            <person name="Nicaud J.-M."/>
            <person name="Nikolski M."/>
            <person name="Oztas S."/>
            <person name="Ozier-Kalogeropoulos O."/>
            <person name="Pellenz S."/>
            <person name="Potier S."/>
            <person name="Richard G.-F."/>
            <person name="Straub M.-L."/>
            <person name="Suleau A."/>
            <person name="Swennen D."/>
            <person name="Tekaia F."/>
            <person name="Wesolowski-Louvel M."/>
            <person name="Westhof E."/>
            <person name="Wirth B."/>
            <person name="Zeniou-Meyer M."/>
            <person name="Zivanovic Y."/>
            <person name="Bolotin-Fukuhara M."/>
            <person name="Thierry A."/>
            <person name="Bouchier C."/>
            <person name="Caudron B."/>
            <person name="Scarpelli C."/>
            <person name="Gaillardin C."/>
            <person name="Weissenbach J."/>
            <person name="Wincker P."/>
            <person name="Souciet J.-L."/>
        </authorList>
    </citation>
    <scope>NUCLEOTIDE SEQUENCE [LARGE SCALE GENOMIC DNA]</scope>
    <source>
        <strain>CLIB 122 / E 150</strain>
    </source>
</reference>
<comment type="function">
    <text evidence="1">The ERF2-ERF4 complex is a palmitoyltransferase specific for Ras proteins. Palmitoylates RAS2, which is required for its proper plasma membrane localization (By similarity).</text>
</comment>
<comment type="subunit">
    <text evidence="1">Interacts with ERF2.</text>
</comment>
<comment type="subcellular location">
    <subcellularLocation>
        <location evidence="1">Endoplasmic reticulum membrane</location>
        <topology evidence="1">Peripheral membrane protein</topology>
    </subcellularLocation>
</comment>
<comment type="similarity">
    <text evidence="2">Belongs to the ERF4 family.</text>
</comment>
<feature type="chain" id="PRO_0000213987" description="Ras modification protein ERF4">
    <location>
        <begin position="1"/>
        <end position="180"/>
    </location>
</feature>
<dbReference type="EMBL" id="CR382131">
    <property type="protein sequence ID" value="CAR64324.1"/>
    <property type="molecule type" value="Genomic_DNA"/>
</dbReference>
<dbReference type="RefSeq" id="XP_002143061.1">
    <property type="nucleotide sequence ID" value="XM_002143025.1"/>
</dbReference>
<dbReference type="SMR" id="P0C0R1"/>
<dbReference type="FunCoup" id="P0C0R1">
    <property type="interactions" value="29"/>
</dbReference>
<dbReference type="STRING" id="284591.P0C0R1"/>
<dbReference type="EnsemblFungi" id="CAR64324">
    <property type="protein sequence ID" value="CAR64324"/>
    <property type="gene ID" value="YALI0_E02827g"/>
</dbReference>
<dbReference type="VEuPathDB" id="FungiDB:YALI0_E02827g"/>
<dbReference type="HOGENOM" id="CLU_087349_0_0_1"/>
<dbReference type="InParanoid" id="P0C0R1"/>
<dbReference type="OMA" id="YASEFVF"/>
<dbReference type="OrthoDB" id="62658at4891"/>
<dbReference type="Proteomes" id="UP000001300">
    <property type="component" value="Chromosome E"/>
</dbReference>
<dbReference type="GO" id="GO:0005789">
    <property type="term" value="C:endoplasmic reticulum membrane"/>
    <property type="evidence" value="ECO:0007669"/>
    <property type="project" value="UniProtKB-SubCell"/>
</dbReference>
<dbReference type="GO" id="GO:0031211">
    <property type="term" value="C:endoplasmic reticulum palmitoyltransferase complex"/>
    <property type="evidence" value="ECO:0000318"/>
    <property type="project" value="GO_Central"/>
</dbReference>
<dbReference type="GO" id="GO:0006612">
    <property type="term" value="P:protein targeting to membrane"/>
    <property type="evidence" value="ECO:0000318"/>
    <property type="project" value="GO_Central"/>
</dbReference>
<dbReference type="InterPro" id="IPR019383">
    <property type="entry name" value="Golgin_A_7/ERF4"/>
</dbReference>
<dbReference type="InterPro" id="IPR051371">
    <property type="entry name" value="Ras_palmitoyltransferase"/>
</dbReference>
<dbReference type="PANTHER" id="PTHR13254">
    <property type="entry name" value="GOLGI AUTOANTIGEN, GOLGIN SUBFAMILY A, 7"/>
    <property type="match status" value="1"/>
</dbReference>
<dbReference type="PANTHER" id="PTHR13254:SF0">
    <property type="entry name" value="GOLGIN SUBFAMILY A MEMBER 7_ERF4 DOMAIN-CONTAINING PROTEIN"/>
    <property type="match status" value="1"/>
</dbReference>
<dbReference type="Pfam" id="PF10256">
    <property type="entry name" value="Erf4"/>
    <property type="match status" value="1"/>
</dbReference>
<name>ERFD_YARLI</name>
<organism>
    <name type="scientific">Yarrowia lipolytica (strain CLIB 122 / E 150)</name>
    <name type="common">Yeast</name>
    <name type="synonym">Candida lipolytica</name>
    <dbReference type="NCBI Taxonomy" id="284591"/>
    <lineage>
        <taxon>Eukaryota</taxon>
        <taxon>Fungi</taxon>
        <taxon>Dikarya</taxon>
        <taxon>Ascomycota</taxon>
        <taxon>Saccharomycotina</taxon>
        <taxon>Dipodascomycetes</taxon>
        <taxon>Dipodascales</taxon>
        <taxon>Dipodascales incertae sedis</taxon>
        <taxon>Yarrowia</taxon>
    </lineage>
</organism>